<dbReference type="EMBL" id="CR628336">
    <property type="protein sequence ID" value="CAH12830.1"/>
    <property type="molecule type" value="Genomic_DNA"/>
</dbReference>
<dbReference type="RefSeq" id="WP_011213984.1">
    <property type="nucleotide sequence ID" value="NC_006368.1"/>
</dbReference>
<dbReference type="SMR" id="Q5X4J8"/>
<dbReference type="KEGG" id="lpp:lpp1678"/>
<dbReference type="LegioList" id="lpp1678"/>
<dbReference type="HOGENOM" id="CLU_047155_0_2_6"/>
<dbReference type="GO" id="GO:0005737">
    <property type="term" value="C:cytoplasm"/>
    <property type="evidence" value="ECO:0007669"/>
    <property type="project" value="UniProtKB-SubCell"/>
</dbReference>
<dbReference type="GO" id="GO:0003746">
    <property type="term" value="F:translation elongation factor activity"/>
    <property type="evidence" value="ECO:0007669"/>
    <property type="project" value="UniProtKB-UniRule"/>
</dbReference>
<dbReference type="CDD" id="cd14275">
    <property type="entry name" value="UBA_EF-Ts"/>
    <property type="match status" value="1"/>
</dbReference>
<dbReference type="FunFam" id="1.10.286.20:FF:000001">
    <property type="entry name" value="Elongation factor Ts"/>
    <property type="match status" value="1"/>
</dbReference>
<dbReference type="FunFam" id="1.10.8.10:FF:000001">
    <property type="entry name" value="Elongation factor Ts"/>
    <property type="match status" value="1"/>
</dbReference>
<dbReference type="Gene3D" id="1.10.286.20">
    <property type="match status" value="1"/>
</dbReference>
<dbReference type="Gene3D" id="1.10.8.10">
    <property type="entry name" value="DNA helicase RuvA subunit, C-terminal domain"/>
    <property type="match status" value="1"/>
</dbReference>
<dbReference type="Gene3D" id="3.30.479.20">
    <property type="entry name" value="Elongation factor Ts, dimerisation domain"/>
    <property type="match status" value="2"/>
</dbReference>
<dbReference type="HAMAP" id="MF_00050">
    <property type="entry name" value="EF_Ts"/>
    <property type="match status" value="1"/>
</dbReference>
<dbReference type="InterPro" id="IPR036402">
    <property type="entry name" value="EF-Ts_dimer_sf"/>
</dbReference>
<dbReference type="InterPro" id="IPR001816">
    <property type="entry name" value="Transl_elong_EFTs/EF1B"/>
</dbReference>
<dbReference type="InterPro" id="IPR014039">
    <property type="entry name" value="Transl_elong_EFTs/EF1B_dimer"/>
</dbReference>
<dbReference type="InterPro" id="IPR018101">
    <property type="entry name" value="Transl_elong_Ts_CS"/>
</dbReference>
<dbReference type="InterPro" id="IPR009060">
    <property type="entry name" value="UBA-like_sf"/>
</dbReference>
<dbReference type="NCBIfam" id="TIGR00116">
    <property type="entry name" value="tsf"/>
    <property type="match status" value="1"/>
</dbReference>
<dbReference type="PANTHER" id="PTHR11741">
    <property type="entry name" value="ELONGATION FACTOR TS"/>
    <property type="match status" value="1"/>
</dbReference>
<dbReference type="PANTHER" id="PTHR11741:SF0">
    <property type="entry name" value="ELONGATION FACTOR TS, MITOCHONDRIAL"/>
    <property type="match status" value="1"/>
</dbReference>
<dbReference type="Pfam" id="PF00889">
    <property type="entry name" value="EF_TS"/>
    <property type="match status" value="1"/>
</dbReference>
<dbReference type="SUPFAM" id="SSF54713">
    <property type="entry name" value="Elongation factor Ts (EF-Ts), dimerisation domain"/>
    <property type="match status" value="2"/>
</dbReference>
<dbReference type="SUPFAM" id="SSF46934">
    <property type="entry name" value="UBA-like"/>
    <property type="match status" value="1"/>
</dbReference>
<dbReference type="PROSITE" id="PS01127">
    <property type="entry name" value="EF_TS_2"/>
    <property type="match status" value="1"/>
</dbReference>
<proteinExistence type="inferred from homology"/>
<feature type="chain" id="PRO_0000161137" description="Elongation factor Ts">
    <location>
        <begin position="1"/>
        <end position="292"/>
    </location>
</feature>
<feature type="region of interest" description="Involved in Mg(2+) ion dislocation from EF-Tu" evidence="1">
    <location>
        <begin position="82"/>
        <end position="85"/>
    </location>
</feature>
<name>EFTS_LEGPA</name>
<accession>Q5X4J8</accession>
<organism>
    <name type="scientific">Legionella pneumophila (strain Paris)</name>
    <dbReference type="NCBI Taxonomy" id="297246"/>
    <lineage>
        <taxon>Bacteria</taxon>
        <taxon>Pseudomonadati</taxon>
        <taxon>Pseudomonadota</taxon>
        <taxon>Gammaproteobacteria</taxon>
        <taxon>Legionellales</taxon>
        <taxon>Legionellaceae</taxon>
        <taxon>Legionella</taxon>
    </lineage>
</organism>
<sequence length="292" mass="32169">MSTISAALVMQLRERTGAGMMECKKFLIATNGDIEQAIIEMRKAGQAKADKKADRVAAEGIIVIARSSDERTAVMLEINSETDFVARDENFTNFANAVADAALTNLPKNIEDLSNQALSSGTTVEQARQELVAKIGENIKLRRLERMHCDGVIGYYLHGSRIGVMVALKNGSEALAKDIAMHVAASKPMVVSRDQVPAEAIENEREIFTAQAKESGKPQEIIDKMIDGRINKFIDEVSLLGQPYVKDPNIKVGQLLKEKNAEVISFVRYEVGEGIEKKEDNFVEEVMAQVRT</sequence>
<evidence type="ECO:0000255" key="1">
    <source>
        <dbReference type="HAMAP-Rule" id="MF_00050"/>
    </source>
</evidence>
<comment type="function">
    <text evidence="1">Associates with the EF-Tu.GDP complex and induces the exchange of GDP to GTP. It remains bound to the aminoacyl-tRNA.EF-Tu.GTP complex up to the GTP hydrolysis stage on the ribosome.</text>
</comment>
<comment type="subcellular location">
    <subcellularLocation>
        <location evidence="1">Cytoplasm</location>
    </subcellularLocation>
</comment>
<comment type="similarity">
    <text evidence="1">Belongs to the EF-Ts family.</text>
</comment>
<protein>
    <recommendedName>
        <fullName evidence="1">Elongation factor Ts</fullName>
        <shortName evidence="1">EF-Ts</shortName>
    </recommendedName>
</protein>
<keyword id="KW-0963">Cytoplasm</keyword>
<keyword id="KW-0251">Elongation factor</keyword>
<keyword id="KW-0648">Protein biosynthesis</keyword>
<reference key="1">
    <citation type="journal article" date="2004" name="Nat. Genet.">
        <title>Evidence in the Legionella pneumophila genome for exploitation of host cell functions and high genome plasticity.</title>
        <authorList>
            <person name="Cazalet C."/>
            <person name="Rusniok C."/>
            <person name="Brueggemann H."/>
            <person name="Zidane N."/>
            <person name="Magnier A."/>
            <person name="Ma L."/>
            <person name="Tichit M."/>
            <person name="Jarraud S."/>
            <person name="Bouchier C."/>
            <person name="Vandenesch F."/>
            <person name="Kunst F."/>
            <person name="Etienne J."/>
            <person name="Glaser P."/>
            <person name="Buchrieser C."/>
        </authorList>
    </citation>
    <scope>NUCLEOTIDE SEQUENCE [LARGE SCALE GENOMIC DNA]</scope>
    <source>
        <strain>Paris</strain>
    </source>
</reference>
<gene>
    <name evidence="1" type="primary">tsf</name>
    <name type="ordered locus">lpp1678</name>
</gene>